<feature type="chain" id="PRO_0000113495" description="Malate dehydrogenase">
    <location>
        <begin position="1"/>
        <end position="325"/>
    </location>
</feature>
<feature type="active site" description="Proton acceptor" evidence="2">
    <location>
        <position position="181"/>
    </location>
</feature>
<feature type="binding site" evidence="1">
    <location>
        <begin position="10"/>
        <end position="15"/>
    </location>
    <ligand>
        <name>NAD(+)</name>
        <dbReference type="ChEBI" id="CHEBI:57540"/>
    </ligand>
</feature>
<feature type="binding site" evidence="1">
    <location>
        <position position="34"/>
    </location>
    <ligand>
        <name>NAD(+)</name>
        <dbReference type="ChEBI" id="CHEBI:57540"/>
    </ligand>
</feature>
<feature type="binding site" evidence="2">
    <location>
        <position position="88"/>
    </location>
    <ligand>
        <name>substrate</name>
    </ligand>
</feature>
<feature type="binding site" evidence="2">
    <location>
        <position position="94"/>
    </location>
    <ligand>
        <name>substrate</name>
    </ligand>
</feature>
<feature type="binding site" evidence="1">
    <location>
        <position position="101"/>
    </location>
    <ligand>
        <name>NAD(+)</name>
        <dbReference type="ChEBI" id="CHEBI:57540"/>
    </ligand>
</feature>
<feature type="binding site" evidence="1">
    <location>
        <begin position="124"/>
        <end position="126"/>
    </location>
    <ligand>
        <name>NAD(+)</name>
        <dbReference type="ChEBI" id="CHEBI:57540"/>
    </ligand>
</feature>
<feature type="binding site" evidence="2">
    <location>
        <position position="126"/>
    </location>
    <ligand>
        <name>substrate</name>
    </ligand>
</feature>
<feature type="binding site" evidence="2">
    <location>
        <position position="157"/>
    </location>
    <ligand>
        <name>substrate</name>
    </ligand>
</feature>
<comment type="function">
    <text evidence="1">Catalyzes the reversible oxidation of malate to oxaloacetate.</text>
</comment>
<comment type="catalytic activity">
    <reaction evidence="1">
        <text>(S)-malate + NAD(+) = oxaloacetate + NADH + H(+)</text>
        <dbReference type="Rhea" id="RHEA:21432"/>
        <dbReference type="ChEBI" id="CHEBI:15378"/>
        <dbReference type="ChEBI" id="CHEBI:15589"/>
        <dbReference type="ChEBI" id="CHEBI:16452"/>
        <dbReference type="ChEBI" id="CHEBI:57540"/>
        <dbReference type="ChEBI" id="CHEBI:57945"/>
        <dbReference type="EC" id="1.1.1.37"/>
    </reaction>
</comment>
<comment type="similarity">
    <text evidence="3">Belongs to the LDH/MDH superfamily.</text>
</comment>
<gene>
    <name type="primary">mdh</name>
    <name type="ordered locus">Ta0952</name>
</gene>
<proteinExistence type="inferred from homology"/>
<protein>
    <recommendedName>
        <fullName evidence="1">Malate dehydrogenase</fullName>
        <ecNumber evidence="1">1.1.1.37</ecNumber>
    </recommendedName>
</protein>
<evidence type="ECO:0000250" key="1">
    <source>
        <dbReference type="UniProtKB" id="O08349"/>
    </source>
</evidence>
<evidence type="ECO:0000250" key="2">
    <source>
        <dbReference type="UniProtKB" id="P61889"/>
    </source>
</evidence>
<evidence type="ECO:0000305" key="3"/>
<organism>
    <name type="scientific">Thermoplasma acidophilum (strain ATCC 25905 / DSM 1728 / JCM 9062 / NBRC 15155 / AMRC-C165)</name>
    <dbReference type="NCBI Taxonomy" id="273075"/>
    <lineage>
        <taxon>Archaea</taxon>
        <taxon>Methanobacteriati</taxon>
        <taxon>Thermoplasmatota</taxon>
        <taxon>Thermoplasmata</taxon>
        <taxon>Thermoplasmatales</taxon>
        <taxon>Thermoplasmataceae</taxon>
        <taxon>Thermoplasma</taxon>
    </lineage>
</organism>
<name>MDH_THEAC</name>
<reference key="1">
    <citation type="submission" date="1999-10" db="EMBL/GenBank/DDBJ databases">
        <title>Cloning and sequencing of the gene for the L-malate dehydrogenase from the thermoacidophilic archaebacterium Thermoplasma acidophilum.</title>
        <authorList>
            <person name="Martinez D."/>
            <person name="Trejo F."/>
            <person name="Gelpi J.L."/>
            <person name="Busquets M."/>
            <person name="Cortes A."/>
        </authorList>
    </citation>
    <scope>NUCLEOTIDE SEQUENCE [GENOMIC DNA]</scope>
</reference>
<reference key="2">
    <citation type="journal article" date="2000" name="Nature">
        <title>The genome sequence of the thermoacidophilic scavenger Thermoplasma acidophilum.</title>
        <authorList>
            <person name="Ruepp A."/>
            <person name="Graml W."/>
            <person name="Santos-Martinez M.-L."/>
            <person name="Koretke K.K."/>
            <person name="Volker C."/>
            <person name="Mewes H.-W."/>
            <person name="Frishman D."/>
            <person name="Stocker S."/>
            <person name="Lupas A.N."/>
            <person name="Baumeister W."/>
        </authorList>
    </citation>
    <scope>NUCLEOTIDE SEQUENCE [LARGE SCALE GENOMIC DNA]</scope>
    <source>
        <strain>ATCC 25905 / DSM 1728 / JCM 9062 / NBRC 15155 / AMRC-C165</strain>
    </source>
</reference>
<accession>Q9HJL5</accession>
<keyword id="KW-0520">NAD</keyword>
<keyword id="KW-0560">Oxidoreductase</keyword>
<keyword id="KW-1185">Reference proteome</keyword>
<keyword id="KW-0816">Tricarboxylic acid cycle</keyword>
<sequence length="325" mass="35524">MARKKISVIGAGNVGATVAQFLAAKQLGDVYLFDVVDGIPEGKALDIQEGAPHWRYDLDVVGFSTSDETKYKNMEGSDVIVVTAGLARKPGMSRDDLFDKNVEIISDVSRNIKKYSPDSIIVVVSNPADIMAYALQKFTGIDPSKIMGLGGSLDSSRFRTFLAKELNVSVEDVNAFVIGGHGDDMVPFIRYSSVAGIPIENLLSKEKIDEIVKRTRFGGGEIVNYLKTGSAFYAPGISITAMVESVIMDKKRVIPCAAYITGKHADHYGIRDKFIGVPIKIGEKGVEQIYDIDFKPDELELWKKSVASVEASSKKVDEWIAKHAH</sequence>
<dbReference type="EC" id="1.1.1.37" evidence="1"/>
<dbReference type="EMBL" id="AF199510">
    <property type="protein sequence ID" value="AAG28562.1"/>
    <property type="molecule type" value="Genomic_DNA"/>
</dbReference>
<dbReference type="EMBL" id="AL445066">
    <property type="protein sequence ID" value="CAC12081.1"/>
    <property type="molecule type" value="Genomic_DNA"/>
</dbReference>
<dbReference type="RefSeq" id="WP_010901363.1">
    <property type="nucleotide sequence ID" value="NC_002578.1"/>
</dbReference>
<dbReference type="SMR" id="Q9HJL5"/>
<dbReference type="FunCoup" id="Q9HJL5">
    <property type="interactions" value="102"/>
</dbReference>
<dbReference type="STRING" id="273075.gene:9572170"/>
<dbReference type="PaxDb" id="273075-Ta0952"/>
<dbReference type="EnsemblBacteria" id="CAC12081">
    <property type="protein sequence ID" value="CAC12081"/>
    <property type="gene ID" value="CAC12081"/>
</dbReference>
<dbReference type="KEGG" id="tac:Ta0952"/>
<dbReference type="eggNOG" id="arCOG00246">
    <property type="taxonomic scope" value="Archaea"/>
</dbReference>
<dbReference type="HOGENOM" id="CLU_045401_2_1_2"/>
<dbReference type="InParanoid" id="Q9HJL5"/>
<dbReference type="OrthoDB" id="2596at2157"/>
<dbReference type="Proteomes" id="UP000001024">
    <property type="component" value="Chromosome"/>
</dbReference>
<dbReference type="GO" id="GO:0004459">
    <property type="term" value="F:L-lactate dehydrogenase activity"/>
    <property type="evidence" value="ECO:0007669"/>
    <property type="project" value="TreeGrafter"/>
</dbReference>
<dbReference type="GO" id="GO:0030060">
    <property type="term" value="F:L-malate dehydrogenase (NAD+) activity"/>
    <property type="evidence" value="ECO:0007669"/>
    <property type="project" value="UniProtKB-EC"/>
</dbReference>
<dbReference type="GO" id="GO:0006089">
    <property type="term" value="P:lactate metabolic process"/>
    <property type="evidence" value="ECO:0007669"/>
    <property type="project" value="TreeGrafter"/>
</dbReference>
<dbReference type="GO" id="GO:0006099">
    <property type="term" value="P:tricarboxylic acid cycle"/>
    <property type="evidence" value="ECO:0007669"/>
    <property type="project" value="UniProtKB-KW"/>
</dbReference>
<dbReference type="CDD" id="cd01339">
    <property type="entry name" value="LDH-like_MDH"/>
    <property type="match status" value="1"/>
</dbReference>
<dbReference type="FunFam" id="3.40.50.720:FF:000018">
    <property type="entry name" value="Malate dehydrogenase"/>
    <property type="match status" value="1"/>
</dbReference>
<dbReference type="FunFam" id="3.90.110.10:FF:000004">
    <property type="entry name" value="Malate dehydrogenase"/>
    <property type="match status" value="1"/>
</dbReference>
<dbReference type="Gene3D" id="3.90.110.10">
    <property type="entry name" value="Lactate dehydrogenase/glycoside hydrolase, family 4, C-terminal"/>
    <property type="match status" value="1"/>
</dbReference>
<dbReference type="Gene3D" id="3.40.50.720">
    <property type="entry name" value="NAD(P)-binding Rossmann-like Domain"/>
    <property type="match status" value="1"/>
</dbReference>
<dbReference type="HAMAP" id="MF_00487">
    <property type="entry name" value="Malate_dehydrog_3"/>
    <property type="match status" value="1"/>
</dbReference>
<dbReference type="InterPro" id="IPR001557">
    <property type="entry name" value="L-lactate/malate_DH"/>
</dbReference>
<dbReference type="InterPro" id="IPR022383">
    <property type="entry name" value="Lactate/malate_DH_C"/>
</dbReference>
<dbReference type="InterPro" id="IPR001236">
    <property type="entry name" value="Lactate/malate_DH_N"/>
</dbReference>
<dbReference type="InterPro" id="IPR015955">
    <property type="entry name" value="Lactate_DH/Glyco_Ohase_4_C"/>
</dbReference>
<dbReference type="InterPro" id="IPR011275">
    <property type="entry name" value="Malate_DH_type3"/>
</dbReference>
<dbReference type="InterPro" id="IPR036291">
    <property type="entry name" value="NAD(P)-bd_dom_sf"/>
</dbReference>
<dbReference type="NCBIfam" id="TIGR01763">
    <property type="entry name" value="MalateDH_bact"/>
    <property type="match status" value="1"/>
</dbReference>
<dbReference type="NCBIfam" id="NF004863">
    <property type="entry name" value="PRK06223.1"/>
    <property type="match status" value="1"/>
</dbReference>
<dbReference type="PANTHER" id="PTHR43128">
    <property type="entry name" value="L-2-HYDROXYCARBOXYLATE DEHYDROGENASE (NAD(P)(+))"/>
    <property type="match status" value="1"/>
</dbReference>
<dbReference type="PANTHER" id="PTHR43128:SF16">
    <property type="entry name" value="L-LACTATE DEHYDROGENASE"/>
    <property type="match status" value="1"/>
</dbReference>
<dbReference type="Pfam" id="PF02866">
    <property type="entry name" value="Ldh_1_C"/>
    <property type="match status" value="1"/>
</dbReference>
<dbReference type="Pfam" id="PF00056">
    <property type="entry name" value="Ldh_1_N"/>
    <property type="match status" value="1"/>
</dbReference>
<dbReference type="PIRSF" id="PIRSF000102">
    <property type="entry name" value="Lac_mal_DH"/>
    <property type="match status" value="1"/>
</dbReference>
<dbReference type="PRINTS" id="PR00086">
    <property type="entry name" value="LLDHDRGNASE"/>
</dbReference>
<dbReference type="SUPFAM" id="SSF56327">
    <property type="entry name" value="LDH C-terminal domain-like"/>
    <property type="match status" value="1"/>
</dbReference>
<dbReference type="SUPFAM" id="SSF51735">
    <property type="entry name" value="NAD(P)-binding Rossmann-fold domains"/>
    <property type="match status" value="1"/>
</dbReference>